<feature type="chain" id="PRO_0000432255" description="Protein Maqu_2141">
    <location>
        <begin position="1"/>
        <end position="351"/>
    </location>
</feature>
<reference key="1">
    <citation type="journal article" date="2011" name="Appl. Environ. Microbiol.">
        <title>Genomic potential of Marinobacter aquaeolei, a biogeochemical 'opportunitroph'.</title>
        <authorList>
            <person name="Singer E."/>
            <person name="Webb E.A."/>
            <person name="Nelson W.C."/>
            <person name="Heidelberg J.F."/>
            <person name="Ivanova N."/>
            <person name="Pati A."/>
            <person name="Edwards K.J."/>
        </authorList>
    </citation>
    <scope>NUCLEOTIDE SEQUENCE [LARGE SCALE GENOMIC DNA]</scope>
    <source>
        <strain>ATCC 700491 / DSM 11845 / VT8</strain>
    </source>
</reference>
<reference key="2">
    <citation type="journal article" date="2014" name="Elife">
        <title>Prediction and characterization of enzymatic activities guided by sequence similarity and genome neighborhood networks.</title>
        <authorList>
            <person name="Zhao S."/>
            <person name="Sakai A."/>
            <person name="Zhang X."/>
            <person name="Vetting M.W."/>
            <person name="Kumar R."/>
            <person name="Hillerich B."/>
            <person name="San Francisco B."/>
            <person name="Solbiati J."/>
            <person name="Steves A."/>
            <person name="Brown S."/>
            <person name="Akiva E."/>
            <person name="Barber A."/>
            <person name="Seidel R.D."/>
            <person name="Babbitt P.C."/>
            <person name="Almo S.C."/>
            <person name="Gerlt J.A."/>
            <person name="Jacobson M.P."/>
        </authorList>
    </citation>
    <scope>LACK OF ACTIVITY AS PROLINE RACEMASE; 4HYPE EPIMERASE AND 3HYPE DEHYDRATASE</scope>
</reference>
<dbReference type="EMBL" id="CP000514">
    <property type="protein sequence ID" value="ABM19220.1"/>
    <property type="molecule type" value="Genomic_DNA"/>
</dbReference>
<dbReference type="RefSeq" id="WP_011785612.1">
    <property type="nucleotide sequence ID" value="NC_008740.1"/>
</dbReference>
<dbReference type="SMR" id="A1U2K1"/>
<dbReference type="STRING" id="351348.Maqu_2141"/>
<dbReference type="KEGG" id="maq:Maqu_2141"/>
<dbReference type="eggNOG" id="COG3938">
    <property type="taxonomic scope" value="Bacteria"/>
</dbReference>
<dbReference type="HOGENOM" id="CLU_036729_2_0_6"/>
<dbReference type="OrthoDB" id="181267at2"/>
<dbReference type="Proteomes" id="UP000000998">
    <property type="component" value="Chromosome"/>
</dbReference>
<dbReference type="GO" id="GO:0047580">
    <property type="term" value="F:4-hydroxyproline epimerase activity"/>
    <property type="evidence" value="ECO:0007669"/>
    <property type="project" value="TreeGrafter"/>
</dbReference>
<dbReference type="Gene3D" id="3.10.310.10">
    <property type="entry name" value="Diaminopimelate Epimerase, Chain A, domain 1"/>
    <property type="match status" value="2"/>
</dbReference>
<dbReference type="InterPro" id="IPR008794">
    <property type="entry name" value="Pro_racemase_fam"/>
</dbReference>
<dbReference type="PANTHER" id="PTHR33442:SF5">
    <property type="entry name" value="BIFUNCTIONAL TRANS-3-HYDROXY-L-PROLINE DEHYDRATASE_2-EPIMERASE"/>
    <property type="match status" value="1"/>
</dbReference>
<dbReference type="PANTHER" id="PTHR33442">
    <property type="entry name" value="TRANS-3-HYDROXY-L-PROLINE DEHYDRATASE"/>
    <property type="match status" value="1"/>
</dbReference>
<dbReference type="Pfam" id="PF05544">
    <property type="entry name" value="Pro_racemase"/>
    <property type="match status" value="1"/>
</dbReference>
<dbReference type="PIRSF" id="PIRSF029792">
    <property type="entry name" value="Pro_racemase"/>
    <property type="match status" value="1"/>
</dbReference>
<dbReference type="SFLD" id="SFLDS00028">
    <property type="entry name" value="Proline_Racemase"/>
    <property type="match status" value="1"/>
</dbReference>
<dbReference type="SUPFAM" id="SSF54506">
    <property type="entry name" value="Diaminopimelate epimerase-like"/>
    <property type="match status" value="1"/>
</dbReference>
<evidence type="ECO:0000269" key="1">
    <source>
    </source>
</evidence>
<evidence type="ECO:0000305" key="2"/>
<evidence type="ECO:0000312" key="3">
    <source>
        <dbReference type="EMBL" id="ABM19220.1"/>
    </source>
</evidence>
<name>Y2141_MARN8</name>
<accession>A1U2K1</accession>
<proteinExistence type="inferred from homology"/>
<gene>
    <name evidence="3" type="ordered locus">Maqu_2141</name>
</gene>
<protein>
    <recommendedName>
        <fullName>Protein Maqu_2141</fullName>
    </recommendedName>
</protein>
<comment type="function">
    <text evidence="1">Displays neither proline racemase activity nor trans-4-hydroxy-L-proline (t4LHyp) epimerase activity nor t3LHyp dehydratase activity.</text>
</comment>
<comment type="similarity">
    <text evidence="2">Belongs to the proline racemase family.</text>
</comment>
<sequence>MKPELTIQLMDTHAGGDVSRIVTGGIDLLPGDTVRAQMEYLRDDADGLRKLLLEEPYGIPEMSVDLLVPATDPRAAAGYIIMEVMGYPIYSGSNTICTATAVLEAGIVPKQEGKQHFMLESPAGLVNIEAIVHDGVVEAVTCEGLPSYIHTYNASINVPGIGEVAYSVAYSGGFYALVDAKSLGFDLTLDEERELARTAHAIVEAIQAARGFSHYTLGDVGPLPFLHFMGPEEKVADGYYRSRSATYVHPGVICRSTTGTGTSARLALMNYEGRIQPGDKLETVSLRDTGFIGEFTTVETEGDYQVVKNSITGKSYVIAHSDIVVNCDDPMVDCDGLHHILSSRHPQRPAT</sequence>
<organism>
    <name type="scientific">Marinobacter nauticus (strain ATCC 700491 / DSM 11845 / VT8)</name>
    <name type="common">Marinobacter aquaeolei</name>
    <dbReference type="NCBI Taxonomy" id="351348"/>
    <lineage>
        <taxon>Bacteria</taxon>
        <taxon>Pseudomonadati</taxon>
        <taxon>Pseudomonadota</taxon>
        <taxon>Gammaproteobacteria</taxon>
        <taxon>Pseudomonadales</taxon>
        <taxon>Marinobacteraceae</taxon>
        <taxon>Marinobacter</taxon>
    </lineage>
</organism>